<reference key="1">
    <citation type="journal article" date="2004" name="J. Infect. Dis.">
        <title>Progress toward characterization of the group A Streptococcus metagenome: complete genome sequence of a macrolide-resistant serotype M6 strain.</title>
        <authorList>
            <person name="Banks D.J."/>
            <person name="Porcella S.F."/>
            <person name="Barbian K.D."/>
            <person name="Beres S.B."/>
            <person name="Philips L.E."/>
            <person name="Voyich J.M."/>
            <person name="DeLeo F.R."/>
            <person name="Martin J.M."/>
            <person name="Somerville G.A."/>
            <person name="Musser J.M."/>
        </authorList>
    </citation>
    <scope>NUCLEOTIDE SEQUENCE [LARGE SCALE GENOMIC DNA]</scope>
    <source>
        <strain>ATCC BAA-946 / MGAS10394</strain>
    </source>
</reference>
<feature type="chain" id="PRO_0000138599" description="Peptide methionine sulfoxide reductase MsrA">
    <location>
        <begin position="1"/>
        <end position="169"/>
    </location>
</feature>
<feature type="active site" evidence="1">
    <location>
        <position position="10"/>
    </location>
</feature>
<protein>
    <recommendedName>
        <fullName evidence="1">Peptide methionine sulfoxide reductase MsrA</fullName>
        <shortName evidence="1">Protein-methionine-S-oxide reductase</shortName>
        <ecNumber evidence="1">1.8.4.11</ecNumber>
    </recommendedName>
    <alternativeName>
        <fullName evidence="1">Peptide-methionine (S)-S-oxide reductase</fullName>
        <shortName evidence="1">Peptide Met(O) reductase</shortName>
    </alternativeName>
</protein>
<evidence type="ECO:0000255" key="1">
    <source>
        <dbReference type="HAMAP-Rule" id="MF_01401"/>
    </source>
</evidence>
<organism>
    <name type="scientific">Streptococcus pyogenes serotype M6 (strain ATCC BAA-946 / MGAS10394)</name>
    <dbReference type="NCBI Taxonomy" id="286636"/>
    <lineage>
        <taxon>Bacteria</taxon>
        <taxon>Bacillati</taxon>
        <taxon>Bacillota</taxon>
        <taxon>Bacilli</taxon>
        <taxon>Lactobacillales</taxon>
        <taxon>Streptococcaceae</taxon>
        <taxon>Streptococcus</taxon>
    </lineage>
</organism>
<keyword id="KW-0560">Oxidoreductase</keyword>
<name>MSRA_STRP6</name>
<proteinExistence type="inferred from homology"/>
<sequence>MERAIFAGGCFWCMVQPFEEQAGILSVRSGYTGGHLPNPSYEQVCAKTTGHTEAVEIIFDPEEISYKELVELYWAQTDPTDAFGQFEDRGDNYRPVIYYTTERQKEIAEQSKANLQASGRFDQPIVTTIEPAEPFYLAEDYHQGFYKKNPKRYAQSSAIRHQFLEENWS</sequence>
<dbReference type="EC" id="1.8.4.11" evidence="1"/>
<dbReference type="EMBL" id="CP000003">
    <property type="protein sequence ID" value="AAT86542.1"/>
    <property type="molecule type" value="Genomic_DNA"/>
</dbReference>
<dbReference type="RefSeq" id="WP_002985759.1">
    <property type="nucleotide sequence ID" value="NC_006086.1"/>
</dbReference>
<dbReference type="SMR" id="Q5XDH1"/>
<dbReference type="KEGG" id="spa:M6_Spy0407"/>
<dbReference type="HOGENOM" id="CLU_031040_10_1_9"/>
<dbReference type="Proteomes" id="UP000001167">
    <property type="component" value="Chromosome"/>
</dbReference>
<dbReference type="GO" id="GO:0033744">
    <property type="term" value="F:L-methionine:thioredoxin-disulfide S-oxidoreductase activity"/>
    <property type="evidence" value="ECO:0007669"/>
    <property type="project" value="RHEA"/>
</dbReference>
<dbReference type="GO" id="GO:0008113">
    <property type="term" value="F:peptide-methionine (S)-S-oxide reductase activity"/>
    <property type="evidence" value="ECO:0007669"/>
    <property type="project" value="UniProtKB-UniRule"/>
</dbReference>
<dbReference type="GO" id="GO:0036211">
    <property type="term" value="P:protein modification process"/>
    <property type="evidence" value="ECO:0007669"/>
    <property type="project" value="UniProtKB-UniRule"/>
</dbReference>
<dbReference type="Gene3D" id="3.30.1060.10">
    <property type="entry name" value="Peptide methionine sulphoxide reductase MsrA"/>
    <property type="match status" value="1"/>
</dbReference>
<dbReference type="HAMAP" id="MF_01401">
    <property type="entry name" value="MsrA"/>
    <property type="match status" value="1"/>
</dbReference>
<dbReference type="InterPro" id="IPR002569">
    <property type="entry name" value="Met_Sox_Rdtase_MsrA_dom"/>
</dbReference>
<dbReference type="InterPro" id="IPR036509">
    <property type="entry name" value="Met_Sox_Rdtase_MsrA_sf"/>
</dbReference>
<dbReference type="NCBIfam" id="TIGR00401">
    <property type="entry name" value="msrA"/>
    <property type="match status" value="1"/>
</dbReference>
<dbReference type="PANTHER" id="PTHR43774">
    <property type="entry name" value="PEPTIDE METHIONINE SULFOXIDE REDUCTASE"/>
    <property type="match status" value="1"/>
</dbReference>
<dbReference type="PANTHER" id="PTHR43774:SF1">
    <property type="entry name" value="PEPTIDE METHIONINE SULFOXIDE REDUCTASE MSRA 2"/>
    <property type="match status" value="1"/>
</dbReference>
<dbReference type="Pfam" id="PF01625">
    <property type="entry name" value="PMSR"/>
    <property type="match status" value="1"/>
</dbReference>
<dbReference type="SUPFAM" id="SSF55068">
    <property type="entry name" value="Peptide methionine sulfoxide reductase"/>
    <property type="match status" value="1"/>
</dbReference>
<comment type="function">
    <text evidence="1">Has an important function as a repair enzyme for proteins that have been inactivated by oxidation. Catalyzes the reversible oxidation-reduction of methionine sulfoxide in proteins to methionine.</text>
</comment>
<comment type="catalytic activity">
    <reaction evidence="1">
        <text>L-methionyl-[protein] + [thioredoxin]-disulfide + H2O = L-methionyl-(S)-S-oxide-[protein] + [thioredoxin]-dithiol</text>
        <dbReference type="Rhea" id="RHEA:14217"/>
        <dbReference type="Rhea" id="RHEA-COMP:10698"/>
        <dbReference type="Rhea" id="RHEA-COMP:10700"/>
        <dbReference type="Rhea" id="RHEA-COMP:12313"/>
        <dbReference type="Rhea" id="RHEA-COMP:12315"/>
        <dbReference type="ChEBI" id="CHEBI:15377"/>
        <dbReference type="ChEBI" id="CHEBI:16044"/>
        <dbReference type="ChEBI" id="CHEBI:29950"/>
        <dbReference type="ChEBI" id="CHEBI:44120"/>
        <dbReference type="ChEBI" id="CHEBI:50058"/>
        <dbReference type="EC" id="1.8.4.11"/>
    </reaction>
</comment>
<comment type="catalytic activity">
    <reaction evidence="1">
        <text>[thioredoxin]-disulfide + L-methionine + H2O = L-methionine (S)-S-oxide + [thioredoxin]-dithiol</text>
        <dbReference type="Rhea" id="RHEA:19993"/>
        <dbReference type="Rhea" id="RHEA-COMP:10698"/>
        <dbReference type="Rhea" id="RHEA-COMP:10700"/>
        <dbReference type="ChEBI" id="CHEBI:15377"/>
        <dbReference type="ChEBI" id="CHEBI:29950"/>
        <dbReference type="ChEBI" id="CHEBI:50058"/>
        <dbReference type="ChEBI" id="CHEBI:57844"/>
        <dbReference type="ChEBI" id="CHEBI:58772"/>
        <dbReference type="EC" id="1.8.4.11"/>
    </reaction>
</comment>
<comment type="similarity">
    <text evidence="1">Belongs to the MsrA Met sulfoxide reductase family.</text>
</comment>
<accession>Q5XDH1</accession>
<gene>
    <name evidence="1" type="primary">msrA</name>
    <name type="ordered locus">M6_Spy0407</name>
</gene>